<comment type="function">
    <text evidence="1">Catalyzes the reversible oxidation of malate to oxaloacetate.</text>
</comment>
<comment type="catalytic activity">
    <reaction evidence="1">
        <text>(S)-malate + NAD(+) = oxaloacetate + NADH + H(+)</text>
        <dbReference type="Rhea" id="RHEA:21432"/>
        <dbReference type="ChEBI" id="CHEBI:15378"/>
        <dbReference type="ChEBI" id="CHEBI:15589"/>
        <dbReference type="ChEBI" id="CHEBI:16452"/>
        <dbReference type="ChEBI" id="CHEBI:57540"/>
        <dbReference type="ChEBI" id="CHEBI:57945"/>
        <dbReference type="EC" id="1.1.1.37"/>
    </reaction>
</comment>
<comment type="similarity">
    <text evidence="1">Belongs to the LDH/MDH superfamily. MDH type 3 family.</text>
</comment>
<comment type="sequence caution" evidence="2">
    <conflict type="erroneous initiation">
        <sequence resource="EMBL-CDS" id="BAB76021"/>
    </conflict>
</comment>
<reference key="1">
    <citation type="journal article" date="2001" name="DNA Res.">
        <title>Complete genomic sequence of the filamentous nitrogen-fixing cyanobacterium Anabaena sp. strain PCC 7120.</title>
        <authorList>
            <person name="Kaneko T."/>
            <person name="Nakamura Y."/>
            <person name="Wolk C.P."/>
            <person name="Kuritz T."/>
            <person name="Sasamoto S."/>
            <person name="Watanabe A."/>
            <person name="Iriguchi M."/>
            <person name="Ishikawa A."/>
            <person name="Kawashima K."/>
            <person name="Kimura T."/>
            <person name="Kishida Y."/>
            <person name="Kohara M."/>
            <person name="Matsumoto M."/>
            <person name="Matsuno A."/>
            <person name="Muraki A."/>
            <person name="Nakazaki N."/>
            <person name="Shimpo S."/>
            <person name="Sugimoto M."/>
            <person name="Takazawa M."/>
            <person name="Yamada M."/>
            <person name="Yasuda M."/>
            <person name="Tabata S."/>
        </authorList>
    </citation>
    <scope>NUCLEOTIDE SEQUENCE [LARGE SCALE GENOMIC DNA]</scope>
    <source>
        <strain>PCC 7120 / SAG 25.82 / UTEX 2576</strain>
    </source>
</reference>
<keyword id="KW-0520">NAD</keyword>
<keyword id="KW-0560">Oxidoreductase</keyword>
<keyword id="KW-1185">Reference proteome</keyword>
<keyword id="KW-0816">Tricarboxylic acid cycle</keyword>
<protein>
    <recommendedName>
        <fullName evidence="1">Malate dehydrogenase</fullName>
        <ecNumber evidence="1">1.1.1.37</ecNumber>
    </recommendedName>
</protein>
<organism>
    <name type="scientific">Nostoc sp. (strain PCC 7120 / SAG 25.82 / UTEX 2576)</name>
    <dbReference type="NCBI Taxonomy" id="103690"/>
    <lineage>
        <taxon>Bacteria</taxon>
        <taxon>Bacillati</taxon>
        <taxon>Cyanobacteriota</taxon>
        <taxon>Cyanophyceae</taxon>
        <taxon>Nostocales</taxon>
        <taxon>Nostocaceae</taxon>
        <taxon>Nostoc</taxon>
    </lineage>
</organism>
<sequence length="323" mass="34924">MFSSPDSPILHCLPRVAIIGAGRVGSTLAQRIAEKNLADVVLLDIVEGIPQGLALDLLEARGIELHNRQIIGTNNYADTSGSQIVVITAGFPRKPGMSRDDLLRTNAKIVIEAAKQAIAYSPYAIFIVVTNPLDVMTYLAWEATGLPRNRIMGMAGVLDSARFETFIALELGVLPADVKAMVLGSHGDLMVPLSRYATVNGIPITQLLDAVTIERLVERTRNGGAEIVELMQTGGAFFAPASATSLMVESILLNQSRLLPVSIYLQGEYDLKDVVIGVPCRLGLNGIESVIELNLSDSEREALHISAKSVQKNIERWRSLQNS</sequence>
<dbReference type="EC" id="1.1.1.37" evidence="1"/>
<dbReference type="EMBL" id="BA000019">
    <property type="protein sequence ID" value="BAB76021.1"/>
    <property type="status" value="ALT_INIT"/>
    <property type="molecule type" value="Genomic_DNA"/>
</dbReference>
<dbReference type="PIR" id="AC2346">
    <property type="entry name" value="AC2346"/>
</dbReference>
<dbReference type="RefSeq" id="WP_044522156.1">
    <property type="nucleotide sequence ID" value="NZ_RSCN01000027.1"/>
</dbReference>
<dbReference type="SMR" id="Q8YP78"/>
<dbReference type="STRING" id="103690.gene:10496371"/>
<dbReference type="KEGG" id="ana:alr4322"/>
<dbReference type="eggNOG" id="COG0039">
    <property type="taxonomic scope" value="Bacteria"/>
</dbReference>
<dbReference type="OrthoDB" id="9802969at2"/>
<dbReference type="Proteomes" id="UP000002483">
    <property type="component" value="Chromosome"/>
</dbReference>
<dbReference type="GO" id="GO:0004459">
    <property type="term" value="F:L-lactate dehydrogenase activity"/>
    <property type="evidence" value="ECO:0007669"/>
    <property type="project" value="TreeGrafter"/>
</dbReference>
<dbReference type="GO" id="GO:0030060">
    <property type="term" value="F:L-malate dehydrogenase (NAD+) activity"/>
    <property type="evidence" value="ECO:0007669"/>
    <property type="project" value="UniProtKB-UniRule"/>
</dbReference>
<dbReference type="GO" id="GO:0006089">
    <property type="term" value="P:lactate metabolic process"/>
    <property type="evidence" value="ECO:0007669"/>
    <property type="project" value="TreeGrafter"/>
</dbReference>
<dbReference type="GO" id="GO:0006099">
    <property type="term" value="P:tricarboxylic acid cycle"/>
    <property type="evidence" value="ECO:0007669"/>
    <property type="project" value="UniProtKB-UniRule"/>
</dbReference>
<dbReference type="CDD" id="cd01339">
    <property type="entry name" value="LDH-like_MDH"/>
    <property type="match status" value="1"/>
</dbReference>
<dbReference type="FunFam" id="3.40.50.720:FF:000018">
    <property type="entry name" value="Malate dehydrogenase"/>
    <property type="match status" value="1"/>
</dbReference>
<dbReference type="FunFam" id="3.90.110.10:FF:000004">
    <property type="entry name" value="Malate dehydrogenase"/>
    <property type="match status" value="1"/>
</dbReference>
<dbReference type="Gene3D" id="3.90.110.10">
    <property type="entry name" value="Lactate dehydrogenase/glycoside hydrolase, family 4, C-terminal"/>
    <property type="match status" value="1"/>
</dbReference>
<dbReference type="Gene3D" id="3.40.50.720">
    <property type="entry name" value="NAD(P)-binding Rossmann-like Domain"/>
    <property type="match status" value="1"/>
</dbReference>
<dbReference type="HAMAP" id="MF_00487">
    <property type="entry name" value="Malate_dehydrog_3"/>
    <property type="match status" value="1"/>
</dbReference>
<dbReference type="InterPro" id="IPR001557">
    <property type="entry name" value="L-lactate/malate_DH"/>
</dbReference>
<dbReference type="InterPro" id="IPR022383">
    <property type="entry name" value="Lactate/malate_DH_C"/>
</dbReference>
<dbReference type="InterPro" id="IPR001236">
    <property type="entry name" value="Lactate/malate_DH_N"/>
</dbReference>
<dbReference type="InterPro" id="IPR015955">
    <property type="entry name" value="Lactate_DH/Glyco_Ohase_4_C"/>
</dbReference>
<dbReference type="InterPro" id="IPR011275">
    <property type="entry name" value="Malate_DH_type3"/>
</dbReference>
<dbReference type="InterPro" id="IPR036291">
    <property type="entry name" value="NAD(P)-bd_dom_sf"/>
</dbReference>
<dbReference type="NCBIfam" id="TIGR01763">
    <property type="entry name" value="MalateDH_bact"/>
    <property type="match status" value="1"/>
</dbReference>
<dbReference type="NCBIfam" id="NF004863">
    <property type="entry name" value="PRK06223.1"/>
    <property type="match status" value="1"/>
</dbReference>
<dbReference type="PANTHER" id="PTHR43128">
    <property type="entry name" value="L-2-HYDROXYCARBOXYLATE DEHYDROGENASE (NAD(P)(+))"/>
    <property type="match status" value="1"/>
</dbReference>
<dbReference type="PANTHER" id="PTHR43128:SF16">
    <property type="entry name" value="L-LACTATE DEHYDROGENASE"/>
    <property type="match status" value="1"/>
</dbReference>
<dbReference type="Pfam" id="PF02866">
    <property type="entry name" value="Ldh_1_C"/>
    <property type="match status" value="1"/>
</dbReference>
<dbReference type="Pfam" id="PF00056">
    <property type="entry name" value="Ldh_1_N"/>
    <property type="match status" value="1"/>
</dbReference>
<dbReference type="PIRSF" id="PIRSF000102">
    <property type="entry name" value="Lac_mal_DH"/>
    <property type="match status" value="1"/>
</dbReference>
<dbReference type="PRINTS" id="PR00086">
    <property type="entry name" value="LLDHDRGNASE"/>
</dbReference>
<dbReference type="SUPFAM" id="SSF56327">
    <property type="entry name" value="LDH C-terminal domain-like"/>
    <property type="match status" value="1"/>
</dbReference>
<dbReference type="SUPFAM" id="SSF51735">
    <property type="entry name" value="NAD(P)-binding Rossmann-fold domains"/>
    <property type="match status" value="1"/>
</dbReference>
<gene>
    <name evidence="1" type="primary">mdh</name>
    <name type="ordered locus">alr4322</name>
</gene>
<name>MDH_NOSS1</name>
<evidence type="ECO:0000255" key="1">
    <source>
        <dbReference type="HAMAP-Rule" id="MF_00487"/>
    </source>
</evidence>
<evidence type="ECO:0000305" key="2"/>
<accession>Q8YP78</accession>
<proteinExistence type="inferred from homology"/>
<feature type="chain" id="PRO_0000113421" description="Malate dehydrogenase">
    <location>
        <begin position="1"/>
        <end position="323"/>
    </location>
</feature>
<feature type="active site" description="Proton acceptor" evidence="1">
    <location>
        <position position="186"/>
    </location>
</feature>
<feature type="binding site" evidence="1">
    <location>
        <begin position="20"/>
        <end position="25"/>
    </location>
    <ligand>
        <name>NAD(+)</name>
        <dbReference type="ChEBI" id="CHEBI:57540"/>
    </ligand>
</feature>
<feature type="binding site" evidence="1">
    <location>
        <position position="44"/>
    </location>
    <ligand>
        <name>NAD(+)</name>
        <dbReference type="ChEBI" id="CHEBI:57540"/>
    </ligand>
</feature>
<feature type="binding site" evidence="1">
    <location>
        <position position="93"/>
    </location>
    <ligand>
        <name>substrate</name>
    </ligand>
</feature>
<feature type="binding site" evidence="1">
    <location>
        <position position="99"/>
    </location>
    <ligand>
        <name>substrate</name>
    </ligand>
</feature>
<feature type="binding site" evidence="1">
    <location>
        <position position="106"/>
    </location>
    <ligand>
        <name>NAD(+)</name>
        <dbReference type="ChEBI" id="CHEBI:57540"/>
    </ligand>
</feature>
<feature type="binding site" evidence="1">
    <location>
        <begin position="129"/>
        <end position="131"/>
    </location>
    <ligand>
        <name>NAD(+)</name>
        <dbReference type="ChEBI" id="CHEBI:57540"/>
    </ligand>
</feature>
<feature type="binding site" evidence="1">
    <location>
        <position position="131"/>
    </location>
    <ligand>
        <name>substrate</name>
    </ligand>
</feature>
<feature type="binding site" evidence="1">
    <location>
        <position position="162"/>
    </location>
    <ligand>
        <name>substrate</name>
    </ligand>
</feature>